<gene>
    <name evidence="1" type="primary">rplE</name>
    <name type="ordered locus">Swol_2321</name>
</gene>
<accession>Q0AUJ2</accession>
<proteinExistence type="inferred from homology"/>
<name>RL5_SYNWW</name>
<evidence type="ECO:0000255" key="1">
    <source>
        <dbReference type="HAMAP-Rule" id="MF_01333"/>
    </source>
</evidence>
<evidence type="ECO:0000305" key="2"/>
<organism>
    <name type="scientific">Syntrophomonas wolfei subsp. wolfei (strain DSM 2245B / Goettingen)</name>
    <dbReference type="NCBI Taxonomy" id="335541"/>
    <lineage>
        <taxon>Bacteria</taxon>
        <taxon>Bacillati</taxon>
        <taxon>Bacillota</taxon>
        <taxon>Clostridia</taxon>
        <taxon>Eubacteriales</taxon>
        <taxon>Syntrophomonadaceae</taxon>
        <taxon>Syntrophomonas</taxon>
    </lineage>
</organism>
<dbReference type="EMBL" id="CP000448">
    <property type="protein sequence ID" value="ABI69612.1"/>
    <property type="molecule type" value="Genomic_DNA"/>
</dbReference>
<dbReference type="RefSeq" id="WP_011641696.1">
    <property type="nucleotide sequence ID" value="NC_008346.1"/>
</dbReference>
<dbReference type="SMR" id="Q0AUJ2"/>
<dbReference type="STRING" id="335541.Swol_2321"/>
<dbReference type="KEGG" id="swo:Swol_2321"/>
<dbReference type="eggNOG" id="COG0094">
    <property type="taxonomic scope" value="Bacteria"/>
</dbReference>
<dbReference type="HOGENOM" id="CLU_061015_2_1_9"/>
<dbReference type="OrthoDB" id="9806626at2"/>
<dbReference type="Proteomes" id="UP000001968">
    <property type="component" value="Chromosome"/>
</dbReference>
<dbReference type="GO" id="GO:1990904">
    <property type="term" value="C:ribonucleoprotein complex"/>
    <property type="evidence" value="ECO:0007669"/>
    <property type="project" value="UniProtKB-KW"/>
</dbReference>
<dbReference type="GO" id="GO:0005840">
    <property type="term" value="C:ribosome"/>
    <property type="evidence" value="ECO:0007669"/>
    <property type="project" value="UniProtKB-KW"/>
</dbReference>
<dbReference type="GO" id="GO:0019843">
    <property type="term" value="F:rRNA binding"/>
    <property type="evidence" value="ECO:0007669"/>
    <property type="project" value="UniProtKB-UniRule"/>
</dbReference>
<dbReference type="GO" id="GO:0003735">
    <property type="term" value="F:structural constituent of ribosome"/>
    <property type="evidence" value="ECO:0007669"/>
    <property type="project" value="InterPro"/>
</dbReference>
<dbReference type="GO" id="GO:0000049">
    <property type="term" value="F:tRNA binding"/>
    <property type="evidence" value="ECO:0007669"/>
    <property type="project" value="UniProtKB-UniRule"/>
</dbReference>
<dbReference type="GO" id="GO:0006412">
    <property type="term" value="P:translation"/>
    <property type="evidence" value="ECO:0007669"/>
    <property type="project" value="UniProtKB-UniRule"/>
</dbReference>
<dbReference type="FunFam" id="3.30.1440.10:FF:000001">
    <property type="entry name" value="50S ribosomal protein L5"/>
    <property type="match status" value="1"/>
</dbReference>
<dbReference type="Gene3D" id="3.30.1440.10">
    <property type="match status" value="1"/>
</dbReference>
<dbReference type="HAMAP" id="MF_01333_B">
    <property type="entry name" value="Ribosomal_uL5_B"/>
    <property type="match status" value="1"/>
</dbReference>
<dbReference type="InterPro" id="IPR002132">
    <property type="entry name" value="Ribosomal_uL5"/>
</dbReference>
<dbReference type="InterPro" id="IPR020930">
    <property type="entry name" value="Ribosomal_uL5_bac-type"/>
</dbReference>
<dbReference type="InterPro" id="IPR031309">
    <property type="entry name" value="Ribosomal_uL5_C"/>
</dbReference>
<dbReference type="InterPro" id="IPR020929">
    <property type="entry name" value="Ribosomal_uL5_CS"/>
</dbReference>
<dbReference type="InterPro" id="IPR022803">
    <property type="entry name" value="Ribosomal_uL5_dom_sf"/>
</dbReference>
<dbReference type="InterPro" id="IPR031310">
    <property type="entry name" value="Ribosomal_uL5_N"/>
</dbReference>
<dbReference type="NCBIfam" id="NF000585">
    <property type="entry name" value="PRK00010.1"/>
    <property type="match status" value="1"/>
</dbReference>
<dbReference type="PANTHER" id="PTHR11994">
    <property type="entry name" value="60S RIBOSOMAL PROTEIN L11-RELATED"/>
    <property type="match status" value="1"/>
</dbReference>
<dbReference type="Pfam" id="PF00281">
    <property type="entry name" value="Ribosomal_L5"/>
    <property type="match status" value="1"/>
</dbReference>
<dbReference type="Pfam" id="PF00673">
    <property type="entry name" value="Ribosomal_L5_C"/>
    <property type="match status" value="1"/>
</dbReference>
<dbReference type="PIRSF" id="PIRSF002161">
    <property type="entry name" value="Ribosomal_L5"/>
    <property type="match status" value="1"/>
</dbReference>
<dbReference type="SUPFAM" id="SSF55282">
    <property type="entry name" value="RL5-like"/>
    <property type="match status" value="1"/>
</dbReference>
<dbReference type="PROSITE" id="PS00358">
    <property type="entry name" value="RIBOSOMAL_L5"/>
    <property type="match status" value="1"/>
</dbReference>
<reference key="1">
    <citation type="journal article" date="2010" name="Environ. Microbiol.">
        <title>The genome of Syntrophomonas wolfei: new insights into syntrophic metabolism and biohydrogen production.</title>
        <authorList>
            <person name="Sieber J.R."/>
            <person name="Sims D.R."/>
            <person name="Han C."/>
            <person name="Kim E."/>
            <person name="Lykidis A."/>
            <person name="Lapidus A.L."/>
            <person name="McDonnald E."/>
            <person name="Rohlin L."/>
            <person name="Culley D.E."/>
            <person name="Gunsalus R."/>
            <person name="McInerney M.J."/>
        </authorList>
    </citation>
    <scope>NUCLEOTIDE SEQUENCE [LARGE SCALE GENOMIC DNA]</scope>
    <source>
        <strain>DSM 2245B / Goettingen</strain>
    </source>
</reference>
<sequence>MARLYETYKKDIVPKMMEKFQYDNIMQVPKVERVVVNIGVGEAIQNPKALDGAVNDLSIISGQKPVITRARKSIAGFKLREGMAIGCKVTLRGERMYDFLDRLINLALPRVRDFRGVSPQAFDGRGNYSLGIKEQTIFPEIDYDKIDKIRGLEVVVVTTAKTDEEARELLKSMGMPFR</sequence>
<protein>
    <recommendedName>
        <fullName evidence="1">Large ribosomal subunit protein uL5</fullName>
    </recommendedName>
    <alternativeName>
        <fullName evidence="2">50S ribosomal protein L5</fullName>
    </alternativeName>
</protein>
<comment type="function">
    <text evidence="1">This is one of the proteins that bind and probably mediate the attachment of the 5S RNA into the large ribosomal subunit, where it forms part of the central protuberance. In the 70S ribosome it contacts protein S13 of the 30S subunit (bridge B1b), connecting the 2 subunits; this bridge is implicated in subunit movement. Contacts the P site tRNA; the 5S rRNA and some of its associated proteins might help stabilize positioning of ribosome-bound tRNAs.</text>
</comment>
<comment type="subunit">
    <text evidence="1">Part of the 50S ribosomal subunit; part of the 5S rRNA/L5/L18/L25 subcomplex. Contacts the 5S rRNA and the P site tRNA. Forms a bridge to the 30S subunit in the 70S ribosome.</text>
</comment>
<comment type="similarity">
    <text evidence="1">Belongs to the universal ribosomal protein uL5 family.</text>
</comment>
<feature type="chain" id="PRO_1000052852" description="Large ribosomal subunit protein uL5">
    <location>
        <begin position="1"/>
        <end position="178"/>
    </location>
</feature>
<keyword id="KW-1185">Reference proteome</keyword>
<keyword id="KW-0687">Ribonucleoprotein</keyword>
<keyword id="KW-0689">Ribosomal protein</keyword>
<keyword id="KW-0694">RNA-binding</keyword>
<keyword id="KW-0699">rRNA-binding</keyword>
<keyword id="KW-0820">tRNA-binding</keyword>